<keyword id="KW-0963">Cytoplasm</keyword>
<keyword id="KW-0444">Lipid biosynthesis</keyword>
<keyword id="KW-0443">Lipid metabolism</keyword>
<keyword id="KW-0520">NAD</keyword>
<keyword id="KW-0521">NADP</keyword>
<keyword id="KW-0547">Nucleotide-binding</keyword>
<keyword id="KW-0560">Oxidoreductase</keyword>
<keyword id="KW-0594">Phospholipid biosynthesis</keyword>
<keyword id="KW-1208">Phospholipid metabolism</keyword>
<comment type="function">
    <text evidence="1">Catalyzes the reduction of the glycolytic intermediate dihydroxyacetone phosphate (DHAP) to sn-glycerol 3-phosphate (G3P), the key precursor for phospholipid synthesis.</text>
</comment>
<comment type="catalytic activity">
    <reaction evidence="1">
        <text>sn-glycerol 3-phosphate + NAD(+) = dihydroxyacetone phosphate + NADH + H(+)</text>
        <dbReference type="Rhea" id="RHEA:11092"/>
        <dbReference type="ChEBI" id="CHEBI:15378"/>
        <dbReference type="ChEBI" id="CHEBI:57540"/>
        <dbReference type="ChEBI" id="CHEBI:57597"/>
        <dbReference type="ChEBI" id="CHEBI:57642"/>
        <dbReference type="ChEBI" id="CHEBI:57945"/>
        <dbReference type="EC" id="1.1.1.94"/>
    </reaction>
    <physiologicalReaction direction="right-to-left" evidence="1">
        <dbReference type="Rhea" id="RHEA:11094"/>
    </physiologicalReaction>
</comment>
<comment type="catalytic activity">
    <reaction evidence="1">
        <text>sn-glycerol 3-phosphate + NADP(+) = dihydroxyacetone phosphate + NADPH + H(+)</text>
        <dbReference type="Rhea" id="RHEA:11096"/>
        <dbReference type="ChEBI" id="CHEBI:15378"/>
        <dbReference type="ChEBI" id="CHEBI:57597"/>
        <dbReference type="ChEBI" id="CHEBI:57642"/>
        <dbReference type="ChEBI" id="CHEBI:57783"/>
        <dbReference type="ChEBI" id="CHEBI:58349"/>
        <dbReference type="EC" id="1.1.1.94"/>
    </reaction>
    <physiologicalReaction direction="right-to-left" evidence="1">
        <dbReference type="Rhea" id="RHEA:11098"/>
    </physiologicalReaction>
</comment>
<comment type="pathway">
    <text evidence="1">Membrane lipid metabolism; glycerophospholipid metabolism.</text>
</comment>
<comment type="subcellular location">
    <subcellularLocation>
        <location evidence="1">Cytoplasm</location>
    </subcellularLocation>
</comment>
<comment type="similarity">
    <text evidence="1">Belongs to the NAD-dependent glycerol-3-phosphate dehydrogenase family.</text>
</comment>
<dbReference type="EC" id="1.1.1.94" evidence="1"/>
<dbReference type="EMBL" id="CP000087">
    <property type="protein sequence ID" value="ABE05306.1"/>
    <property type="molecule type" value="Genomic_DNA"/>
</dbReference>
<dbReference type="RefSeq" id="WP_011477882.1">
    <property type="nucleotide sequence ID" value="NC_007940.1"/>
</dbReference>
<dbReference type="SMR" id="Q1RH58"/>
<dbReference type="KEGG" id="rbe:RBE_1225"/>
<dbReference type="eggNOG" id="COG0240">
    <property type="taxonomic scope" value="Bacteria"/>
</dbReference>
<dbReference type="HOGENOM" id="CLU_033449_0_0_5"/>
<dbReference type="OrthoDB" id="9812273at2"/>
<dbReference type="UniPathway" id="UPA00940"/>
<dbReference type="Proteomes" id="UP000001951">
    <property type="component" value="Chromosome"/>
</dbReference>
<dbReference type="GO" id="GO:0005829">
    <property type="term" value="C:cytosol"/>
    <property type="evidence" value="ECO:0007669"/>
    <property type="project" value="TreeGrafter"/>
</dbReference>
<dbReference type="GO" id="GO:0047952">
    <property type="term" value="F:glycerol-3-phosphate dehydrogenase [NAD(P)+] activity"/>
    <property type="evidence" value="ECO:0007669"/>
    <property type="project" value="UniProtKB-UniRule"/>
</dbReference>
<dbReference type="GO" id="GO:0051287">
    <property type="term" value="F:NAD binding"/>
    <property type="evidence" value="ECO:0007669"/>
    <property type="project" value="InterPro"/>
</dbReference>
<dbReference type="GO" id="GO:0005975">
    <property type="term" value="P:carbohydrate metabolic process"/>
    <property type="evidence" value="ECO:0007669"/>
    <property type="project" value="InterPro"/>
</dbReference>
<dbReference type="GO" id="GO:0046167">
    <property type="term" value="P:glycerol-3-phosphate biosynthetic process"/>
    <property type="evidence" value="ECO:0007669"/>
    <property type="project" value="UniProtKB-UniRule"/>
</dbReference>
<dbReference type="GO" id="GO:0046168">
    <property type="term" value="P:glycerol-3-phosphate catabolic process"/>
    <property type="evidence" value="ECO:0007669"/>
    <property type="project" value="InterPro"/>
</dbReference>
<dbReference type="GO" id="GO:0006650">
    <property type="term" value="P:glycerophospholipid metabolic process"/>
    <property type="evidence" value="ECO:0007669"/>
    <property type="project" value="UniProtKB-UniRule"/>
</dbReference>
<dbReference type="GO" id="GO:0008654">
    <property type="term" value="P:phospholipid biosynthetic process"/>
    <property type="evidence" value="ECO:0007669"/>
    <property type="project" value="UniProtKB-KW"/>
</dbReference>
<dbReference type="Gene3D" id="1.10.1040.10">
    <property type="entry name" value="N-(1-d-carboxylethyl)-l-norvaline Dehydrogenase, domain 2"/>
    <property type="match status" value="1"/>
</dbReference>
<dbReference type="Gene3D" id="3.40.50.720">
    <property type="entry name" value="NAD(P)-binding Rossmann-like Domain"/>
    <property type="match status" value="1"/>
</dbReference>
<dbReference type="HAMAP" id="MF_00394">
    <property type="entry name" value="NAD_Glyc3P_dehydrog"/>
    <property type="match status" value="1"/>
</dbReference>
<dbReference type="InterPro" id="IPR008927">
    <property type="entry name" value="6-PGluconate_DH-like_C_sf"/>
</dbReference>
<dbReference type="InterPro" id="IPR013328">
    <property type="entry name" value="6PGD_dom2"/>
</dbReference>
<dbReference type="InterPro" id="IPR006168">
    <property type="entry name" value="G3P_DH_NAD-dep"/>
</dbReference>
<dbReference type="InterPro" id="IPR006109">
    <property type="entry name" value="G3P_DH_NAD-dep_C"/>
</dbReference>
<dbReference type="InterPro" id="IPR011128">
    <property type="entry name" value="G3P_DH_NAD-dep_N"/>
</dbReference>
<dbReference type="InterPro" id="IPR036291">
    <property type="entry name" value="NAD(P)-bd_dom_sf"/>
</dbReference>
<dbReference type="NCBIfam" id="NF000940">
    <property type="entry name" value="PRK00094.1-2"/>
    <property type="match status" value="1"/>
</dbReference>
<dbReference type="NCBIfam" id="NF000942">
    <property type="entry name" value="PRK00094.1-4"/>
    <property type="match status" value="1"/>
</dbReference>
<dbReference type="NCBIfam" id="NF000947">
    <property type="entry name" value="PRK00094.2-5"/>
    <property type="match status" value="1"/>
</dbReference>
<dbReference type="PANTHER" id="PTHR11728">
    <property type="entry name" value="GLYCEROL-3-PHOSPHATE DEHYDROGENASE"/>
    <property type="match status" value="1"/>
</dbReference>
<dbReference type="PANTHER" id="PTHR11728:SF1">
    <property type="entry name" value="GLYCEROL-3-PHOSPHATE DEHYDROGENASE [NAD(+)] 2, CHLOROPLASTIC"/>
    <property type="match status" value="1"/>
</dbReference>
<dbReference type="Pfam" id="PF07479">
    <property type="entry name" value="NAD_Gly3P_dh_C"/>
    <property type="match status" value="1"/>
</dbReference>
<dbReference type="Pfam" id="PF01210">
    <property type="entry name" value="NAD_Gly3P_dh_N"/>
    <property type="match status" value="1"/>
</dbReference>
<dbReference type="PIRSF" id="PIRSF000114">
    <property type="entry name" value="Glycerol-3-P_dh"/>
    <property type="match status" value="1"/>
</dbReference>
<dbReference type="PRINTS" id="PR00077">
    <property type="entry name" value="GPDHDRGNASE"/>
</dbReference>
<dbReference type="SUPFAM" id="SSF48179">
    <property type="entry name" value="6-phosphogluconate dehydrogenase C-terminal domain-like"/>
    <property type="match status" value="1"/>
</dbReference>
<dbReference type="SUPFAM" id="SSF51735">
    <property type="entry name" value="NAD(P)-binding Rossmann-fold domains"/>
    <property type="match status" value="1"/>
</dbReference>
<dbReference type="PROSITE" id="PS00957">
    <property type="entry name" value="NAD_G3PDH"/>
    <property type="match status" value="1"/>
</dbReference>
<reference key="1">
    <citation type="journal article" date="2006" name="PLoS Genet.">
        <title>Genome sequence of Rickettsia bellii illuminates the role of amoebae in gene exchanges between intracellular pathogens.</title>
        <authorList>
            <person name="Ogata H."/>
            <person name="La Scola B."/>
            <person name="Audic S."/>
            <person name="Renesto P."/>
            <person name="Blanc G."/>
            <person name="Robert C."/>
            <person name="Fournier P.-E."/>
            <person name="Claverie J.-M."/>
            <person name="Raoult D."/>
        </authorList>
    </citation>
    <scope>NUCLEOTIDE SEQUENCE [LARGE SCALE GENOMIC DNA]</scope>
    <source>
        <strain>RML369-C</strain>
    </source>
</reference>
<feature type="chain" id="PRO_0000255361" description="Glycerol-3-phosphate dehydrogenase [NAD(P)+]">
    <location>
        <begin position="1"/>
        <end position="314"/>
    </location>
</feature>
<feature type="active site" description="Proton acceptor" evidence="1">
    <location>
        <position position="191"/>
    </location>
</feature>
<feature type="binding site" evidence="1">
    <location>
        <position position="14"/>
    </location>
    <ligand>
        <name>NADPH</name>
        <dbReference type="ChEBI" id="CHEBI:57783"/>
    </ligand>
</feature>
<feature type="binding site" evidence="1">
    <location>
        <position position="15"/>
    </location>
    <ligand>
        <name>NADPH</name>
        <dbReference type="ChEBI" id="CHEBI:57783"/>
    </ligand>
</feature>
<feature type="binding site" evidence="1">
    <location>
        <position position="35"/>
    </location>
    <ligand>
        <name>NADPH</name>
        <dbReference type="ChEBI" id="CHEBI:57783"/>
    </ligand>
</feature>
<feature type="binding site" evidence="1">
    <location>
        <position position="108"/>
    </location>
    <ligand>
        <name>NADPH</name>
        <dbReference type="ChEBI" id="CHEBI:57783"/>
    </ligand>
</feature>
<feature type="binding site" evidence="1">
    <location>
        <position position="108"/>
    </location>
    <ligand>
        <name>sn-glycerol 3-phosphate</name>
        <dbReference type="ChEBI" id="CHEBI:57597"/>
    </ligand>
</feature>
<feature type="binding site" evidence="1">
    <location>
        <position position="136"/>
    </location>
    <ligand>
        <name>sn-glycerol 3-phosphate</name>
        <dbReference type="ChEBI" id="CHEBI:57597"/>
    </ligand>
</feature>
<feature type="binding site" evidence="1">
    <location>
        <position position="140"/>
    </location>
    <ligand>
        <name>NADPH</name>
        <dbReference type="ChEBI" id="CHEBI:57783"/>
    </ligand>
</feature>
<feature type="binding site" evidence="1">
    <location>
        <position position="191"/>
    </location>
    <ligand>
        <name>sn-glycerol 3-phosphate</name>
        <dbReference type="ChEBI" id="CHEBI:57597"/>
    </ligand>
</feature>
<feature type="binding site" evidence="1">
    <location>
        <position position="247"/>
    </location>
    <ligand>
        <name>sn-glycerol 3-phosphate</name>
        <dbReference type="ChEBI" id="CHEBI:57597"/>
    </ligand>
</feature>
<feature type="binding site" evidence="1">
    <location>
        <position position="257"/>
    </location>
    <ligand>
        <name>sn-glycerol 3-phosphate</name>
        <dbReference type="ChEBI" id="CHEBI:57597"/>
    </ligand>
</feature>
<feature type="binding site" evidence="1">
    <location>
        <position position="258"/>
    </location>
    <ligand>
        <name>NADPH</name>
        <dbReference type="ChEBI" id="CHEBI:57783"/>
    </ligand>
</feature>
<feature type="binding site" evidence="1">
    <location>
        <position position="258"/>
    </location>
    <ligand>
        <name>sn-glycerol 3-phosphate</name>
        <dbReference type="ChEBI" id="CHEBI:57597"/>
    </ligand>
</feature>
<feature type="binding site" evidence="1">
    <location>
        <position position="259"/>
    </location>
    <ligand>
        <name>sn-glycerol 3-phosphate</name>
        <dbReference type="ChEBI" id="CHEBI:57597"/>
    </ligand>
</feature>
<feature type="binding site" evidence="1">
    <location>
        <position position="282"/>
    </location>
    <ligand>
        <name>NADPH</name>
        <dbReference type="ChEBI" id="CHEBI:57783"/>
    </ligand>
</feature>
<feature type="binding site" evidence="1">
    <location>
        <position position="284"/>
    </location>
    <ligand>
        <name>NADPH</name>
        <dbReference type="ChEBI" id="CHEBI:57783"/>
    </ligand>
</feature>
<protein>
    <recommendedName>
        <fullName evidence="1">Glycerol-3-phosphate dehydrogenase [NAD(P)+]</fullName>
        <ecNumber evidence="1">1.1.1.94</ecNumber>
    </recommendedName>
    <alternativeName>
        <fullName evidence="1">NAD(P)(+)-dependent glycerol-3-phosphate dehydrogenase</fullName>
    </alternativeName>
    <alternativeName>
        <fullName evidence="1">NAD(P)H-dependent dihydroxyacetone-phosphate reductase</fullName>
    </alternativeName>
</protein>
<gene>
    <name evidence="1" type="primary">gpsA</name>
    <name type="ordered locus">RBE_1225</name>
</gene>
<sequence length="314" mass="34243">MKRFKNIAVYGGGSFGTSLAAIAARVCENVTLFLRDEEIAKEITDKKTNTKYLGNIKLPSNLQATTNLDKIKDFELIIIAVPSYAFDEAIKLLKTHISNDNILLIATKGFARNPTELFSDRLKTLLSNNPIAFLSGPNLAKDLAKGLPASATIASLDIDLANKISYNLSSEAFVASTINDVITLQVAGALKNIFAIKSGIDMAKEQGENAKATLIVSALKEIAILSKALGGMKNNMDILLEAGVVGDLVLTCYSRSSRNTKFGYEFGISKDKQKFLQEYKELVEGREAIKLVLELIERYDLDMPIVSSLGNVIR</sequence>
<organism>
    <name type="scientific">Rickettsia bellii (strain RML369-C)</name>
    <dbReference type="NCBI Taxonomy" id="336407"/>
    <lineage>
        <taxon>Bacteria</taxon>
        <taxon>Pseudomonadati</taxon>
        <taxon>Pseudomonadota</taxon>
        <taxon>Alphaproteobacteria</taxon>
        <taxon>Rickettsiales</taxon>
        <taxon>Rickettsiaceae</taxon>
        <taxon>Rickettsieae</taxon>
        <taxon>Rickettsia</taxon>
        <taxon>belli group</taxon>
    </lineage>
</organism>
<evidence type="ECO:0000255" key="1">
    <source>
        <dbReference type="HAMAP-Rule" id="MF_00394"/>
    </source>
</evidence>
<name>GPDA_RICBR</name>
<proteinExistence type="inferred from homology"/>
<accession>Q1RH58</accession>